<feature type="signal peptide" evidence="2">
    <location>
        <begin position="1"/>
        <end position="16"/>
    </location>
</feature>
<feature type="chain" id="PRO_0000022346" description="Fibrohexamerin">
    <location>
        <begin position="17"/>
        <end position="218"/>
    </location>
</feature>
<feature type="glycosylation site" description="N-linked (GlcNAc...) asparagine" evidence="1">
    <location>
        <position position="37"/>
    </location>
</feature>
<feature type="glycosylation site" description="N-linked (GlcNAc...) asparagine" evidence="1">
    <location>
        <position position="69"/>
    </location>
</feature>
<feature type="sequence conflict" description="In Ref. 3; AA sequence." evidence="3" ref="3">
    <original>C</original>
    <variation>P</variation>
    <location>
        <position position="26"/>
    </location>
</feature>
<feature type="sequence conflict" description="In Ref. 3; AA sequence." evidence="3" ref="3">
    <original>L</original>
    <variation>D</variation>
    <location>
        <position position="31"/>
    </location>
</feature>
<dbReference type="EMBL" id="AF009827">
    <property type="protein sequence ID" value="AAC17486.1"/>
    <property type="molecule type" value="mRNA"/>
</dbReference>
<dbReference type="EMBL" id="AF009677">
    <property type="protein sequence ID" value="AAC38994.1"/>
    <property type="molecule type" value="Genomic_DNA"/>
</dbReference>
<dbReference type="GlyCosmos" id="O62605">
    <property type="glycosylation" value="2 sites, No reported glycans"/>
</dbReference>
<dbReference type="InParanoid" id="O62605"/>
<dbReference type="Proteomes" id="UP000504614">
    <property type="component" value="Unplaced"/>
</dbReference>
<dbReference type="GO" id="GO:0005576">
    <property type="term" value="C:extracellular region"/>
    <property type="evidence" value="ECO:0007669"/>
    <property type="project" value="UniProtKB-SubCell"/>
</dbReference>
<dbReference type="GO" id="GO:0005198">
    <property type="term" value="F:structural molecule activity"/>
    <property type="evidence" value="ECO:0007669"/>
    <property type="project" value="InterPro"/>
</dbReference>
<dbReference type="InterPro" id="IPR009911">
    <property type="entry name" value="Fibroin_P25"/>
</dbReference>
<dbReference type="Pfam" id="PF07294">
    <property type="entry name" value="Fibroin_P25"/>
    <property type="match status" value="1"/>
</dbReference>
<dbReference type="PIRSF" id="PIRSF008881">
    <property type="entry name" value="Fibroin_P25"/>
    <property type="match status" value="1"/>
</dbReference>
<accession>O62605</accession>
<gene>
    <name type="primary">P25</name>
</gene>
<name>SI25_GALME</name>
<protein>
    <recommendedName>
        <fullName>Fibrohexamerin</fullName>
    </recommendedName>
    <alternativeName>
        <fullName>25 kDa silk glycoprotein</fullName>
    </alternativeName>
    <alternativeName>
        <fullName>p25</fullName>
    </alternativeName>
</protein>
<comment type="subunit">
    <text>Silk fibroin elementary unit consists in a disulfide-linked heavy and light chain and a p25 glycoprotein in molar ratios of 6:6:1. This results in a complex of approximately 2.3 MDa.</text>
</comment>
<comment type="subcellular location">
    <subcellularLocation>
        <location>Secreted</location>
    </subcellularLocation>
</comment>
<comment type="tissue specificity">
    <text>Produced exclusively in the posterior (PSG) section of silk glands, which are essentially modified salivary glands.</text>
</comment>
<comment type="developmental stage">
    <text>Levels are low until the penultimate larval instar, and peak in feeding larvae of this instar. Expression decreases again at the molt to the last larval instar. Levels rise rapidly after ecdysis when the larvae initiate feeding and reach a maximum in slowly mobile prepupae at the end of cocoon spinning. There is then a ten-fold drop which coincides with the start of silk gland degeneration.</text>
</comment>
<comment type="PTM">
    <text>Found in 2 differentially glycosylated forms (29 kDa and 30 kDa).</text>
</comment>
<organism>
    <name type="scientific">Galleria mellonella</name>
    <name type="common">Greater wax moth</name>
    <dbReference type="NCBI Taxonomy" id="7137"/>
    <lineage>
        <taxon>Eukaryota</taxon>
        <taxon>Metazoa</taxon>
        <taxon>Ecdysozoa</taxon>
        <taxon>Arthropoda</taxon>
        <taxon>Hexapoda</taxon>
        <taxon>Insecta</taxon>
        <taxon>Pterygota</taxon>
        <taxon>Neoptera</taxon>
        <taxon>Endopterygota</taxon>
        <taxon>Lepidoptera</taxon>
        <taxon>Glossata</taxon>
        <taxon>Ditrysia</taxon>
        <taxon>Pyraloidea</taxon>
        <taxon>Pyralidae</taxon>
        <taxon>Galleriinae</taxon>
        <taxon>Galleria</taxon>
    </lineage>
</organism>
<keyword id="KW-0903">Direct protein sequencing</keyword>
<keyword id="KW-1015">Disulfide bond</keyword>
<keyword id="KW-0325">Glycoprotein</keyword>
<keyword id="KW-1185">Reference proteome</keyword>
<keyword id="KW-0964">Secreted</keyword>
<keyword id="KW-0732">Signal</keyword>
<keyword id="KW-0737">Silk protein</keyword>
<evidence type="ECO:0000255" key="1"/>
<evidence type="ECO:0000269" key="2">
    <source>
    </source>
</evidence>
<evidence type="ECO:0000305" key="3"/>
<reference key="1">
    <citation type="journal article" date="1998" name="Mol. Gen. Genet.">
        <title>The P25 component of Galleria silk.</title>
        <authorList>
            <person name="Zurovec M."/>
            <person name="Kodrik D."/>
            <person name="Yang C."/>
            <person name="Sehnal F."/>
            <person name="Scheller K."/>
        </authorList>
    </citation>
    <scope>NUCLEOTIDE SEQUENCE [MRNA]</scope>
    <scope>CHARACTERIZATION</scope>
    <source>
        <tissue>Posterior silk gland</tissue>
    </source>
</reference>
<reference key="2">
    <citation type="journal article" date="1998" name="Gene">
        <title>Characterization of the P25 silk gene and associated insertion elements in Galleria mellonella.</title>
        <authorList>
            <person name="Yang C."/>
            <person name="Teng X."/>
            <person name="Zurovec M."/>
            <person name="Scheller K."/>
            <person name="Sehnal F."/>
        </authorList>
    </citation>
    <scope>NUCLEOTIDE SEQUENCE [GENOMIC DNA]</scope>
    <source>
        <tissue>Larva</tissue>
    </source>
</reference>
<reference key="3">
    <citation type="journal article" date="1995" name="Mol. Gen. Genet.">
        <title>Light-chain fibroin of Galleria mellonella L.</title>
        <authorList>
            <person name="Zurovec M."/>
            <person name="Vaskova M."/>
            <person name="Kodrik D."/>
            <person name="Sehnal F."/>
            <person name="Kumaran A.K."/>
        </authorList>
    </citation>
    <scope>PROTEIN SEQUENCE OF 17-31</scope>
    <source>
        <tissue>Posterior silk gland</tissue>
    </source>
</reference>
<proteinExistence type="evidence at protein level"/>
<sequence>MLKFIIFALTVALCEAGPANNVVRPCRLDDLKCIRDNISANSNCNANVRGSIPSEYVIPRFNFETPFFNASYIDNNLIIRNNDACRVSEFFFNVKADTSVLAVDCPNLDLESDRTLIQHASLQEETTYNYHIRGIYPLIRLTTNLLNADRLNLCNAFTYADVTALPIFKIDPKDRPTANFLSRDLSLLNIYERETFAYRPPQLIRQFVNSLICDFGCQ</sequence>